<dbReference type="EMBL" id="CP000560">
    <property type="protein sequence ID" value="ABS74575.1"/>
    <property type="molecule type" value="Genomic_DNA"/>
</dbReference>
<dbReference type="SMR" id="A7Z6E9"/>
<dbReference type="GeneID" id="93081351"/>
<dbReference type="KEGG" id="bay:RBAM_022140"/>
<dbReference type="HOGENOM" id="CLU_190949_0_2_9"/>
<dbReference type="Proteomes" id="UP000001120">
    <property type="component" value="Chromosome"/>
</dbReference>
<dbReference type="GO" id="GO:0005737">
    <property type="term" value="C:cytoplasm"/>
    <property type="evidence" value="ECO:0007669"/>
    <property type="project" value="UniProtKB-ARBA"/>
</dbReference>
<dbReference type="GO" id="GO:1990904">
    <property type="term" value="C:ribonucleoprotein complex"/>
    <property type="evidence" value="ECO:0007669"/>
    <property type="project" value="UniProtKB-KW"/>
</dbReference>
<dbReference type="GO" id="GO:0005840">
    <property type="term" value="C:ribosome"/>
    <property type="evidence" value="ECO:0007669"/>
    <property type="project" value="UniProtKB-KW"/>
</dbReference>
<dbReference type="GO" id="GO:0003735">
    <property type="term" value="F:structural constituent of ribosome"/>
    <property type="evidence" value="ECO:0007669"/>
    <property type="project" value="InterPro"/>
</dbReference>
<dbReference type="GO" id="GO:0006412">
    <property type="term" value="P:translation"/>
    <property type="evidence" value="ECO:0007669"/>
    <property type="project" value="UniProtKB-UniRule"/>
</dbReference>
<dbReference type="Gene3D" id="2.20.28.120">
    <property type="entry name" value="Ribosomal protein L33"/>
    <property type="match status" value="1"/>
</dbReference>
<dbReference type="HAMAP" id="MF_00294">
    <property type="entry name" value="Ribosomal_bL33"/>
    <property type="match status" value="1"/>
</dbReference>
<dbReference type="InterPro" id="IPR001705">
    <property type="entry name" value="Ribosomal_bL33"/>
</dbReference>
<dbReference type="InterPro" id="IPR018264">
    <property type="entry name" value="Ribosomal_bL33_CS"/>
</dbReference>
<dbReference type="InterPro" id="IPR038584">
    <property type="entry name" value="Ribosomal_bL33_sf"/>
</dbReference>
<dbReference type="InterPro" id="IPR011332">
    <property type="entry name" value="Ribosomal_zn-bd"/>
</dbReference>
<dbReference type="NCBIfam" id="NF001764">
    <property type="entry name" value="PRK00504.1"/>
    <property type="match status" value="1"/>
</dbReference>
<dbReference type="NCBIfam" id="NF001860">
    <property type="entry name" value="PRK00595.1"/>
    <property type="match status" value="1"/>
</dbReference>
<dbReference type="NCBIfam" id="TIGR01023">
    <property type="entry name" value="rpmG_bact"/>
    <property type="match status" value="1"/>
</dbReference>
<dbReference type="PANTHER" id="PTHR43168">
    <property type="entry name" value="50S RIBOSOMAL PROTEIN L33, CHLOROPLASTIC"/>
    <property type="match status" value="1"/>
</dbReference>
<dbReference type="PANTHER" id="PTHR43168:SF2">
    <property type="entry name" value="LARGE RIBOSOMAL SUBUNIT PROTEIN BL33C"/>
    <property type="match status" value="1"/>
</dbReference>
<dbReference type="Pfam" id="PF00471">
    <property type="entry name" value="Ribosomal_L33"/>
    <property type="match status" value="1"/>
</dbReference>
<dbReference type="SUPFAM" id="SSF57829">
    <property type="entry name" value="Zn-binding ribosomal proteins"/>
    <property type="match status" value="1"/>
</dbReference>
<dbReference type="PROSITE" id="PS00582">
    <property type="entry name" value="RIBOSOMAL_L33"/>
    <property type="match status" value="1"/>
</dbReference>
<feature type="chain" id="PRO_0000356378" description="Large ribosomal subunit protein bL33B">
    <location>
        <begin position="1"/>
        <end position="49"/>
    </location>
</feature>
<evidence type="ECO:0000255" key="1">
    <source>
        <dbReference type="HAMAP-Rule" id="MF_00294"/>
    </source>
</evidence>
<protein>
    <recommendedName>
        <fullName evidence="1">Large ribosomal subunit protein bL33B</fullName>
    </recommendedName>
    <alternativeName>
        <fullName evidence="1">50S ribosomal protein L33 2</fullName>
    </alternativeName>
</protein>
<accession>A7Z6E9</accession>
<reference key="1">
    <citation type="journal article" date="2007" name="Nat. Biotechnol.">
        <title>Comparative analysis of the complete genome sequence of the plant growth-promoting bacterium Bacillus amyloliquefaciens FZB42.</title>
        <authorList>
            <person name="Chen X.H."/>
            <person name="Koumoutsi A."/>
            <person name="Scholz R."/>
            <person name="Eisenreich A."/>
            <person name="Schneider K."/>
            <person name="Heinemeyer I."/>
            <person name="Morgenstern B."/>
            <person name="Voss B."/>
            <person name="Hess W.R."/>
            <person name="Reva O."/>
            <person name="Junge H."/>
            <person name="Voigt B."/>
            <person name="Jungblut P.R."/>
            <person name="Vater J."/>
            <person name="Suessmuth R."/>
            <person name="Liesegang H."/>
            <person name="Strittmatter A."/>
            <person name="Gottschalk G."/>
            <person name="Borriss R."/>
        </authorList>
    </citation>
    <scope>NUCLEOTIDE SEQUENCE [LARGE SCALE GENOMIC DNA]</scope>
    <source>
        <strain>DSM 23117 / BGSC 10A6 / LMG 26770 / FZB42</strain>
    </source>
</reference>
<sequence>MRVNVTLACTETGDRNYITTKNKRTNPDRLEMKKYSPRLKKYTLHRETK</sequence>
<name>RL332_BACVZ</name>
<gene>
    <name evidence="1" type="primary">rpmG2</name>
    <name type="synonym">rpmGA1</name>
    <name type="ordered locus">RBAM_022140</name>
</gene>
<keyword id="KW-0687">Ribonucleoprotein</keyword>
<keyword id="KW-0689">Ribosomal protein</keyword>
<organism>
    <name type="scientific">Bacillus velezensis (strain DSM 23117 / BGSC 10A6 / LMG 26770 / FZB42)</name>
    <name type="common">Bacillus amyloliquefaciens subsp. plantarum</name>
    <dbReference type="NCBI Taxonomy" id="326423"/>
    <lineage>
        <taxon>Bacteria</taxon>
        <taxon>Bacillati</taxon>
        <taxon>Bacillota</taxon>
        <taxon>Bacilli</taxon>
        <taxon>Bacillales</taxon>
        <taxon>Bacillaceae</taxon>
        <taxon>Bacillus</taxon>
        <taxon>Bacillus amyloliquefaciens group</taxon>
    </lineage>
</organism>
<comment type="similarity">
    <text evidence="1">Belongs to the bacterial ribosomal protein bL33 family.</text>
</comment>
<proteinExistence type="inferred from homology"/>